<protein>
    <recommendedName>
        <fullName>Stromelysin-1</fullName>
        <shortName>SL-1</shortName>
        <ecNumber>3.4.24.17</ecNumber>
    </recommendedName>
    <alternativeName>
        <fullName>Matrix metalloproteinase-3</fullName>
        <shortName>MMP-3</shortName>
    </alternativeName>
</protein>
<accession>Q28397</accession>
<organism>
    <name type="scientific">Equus caballus</name>
    <name type="common">Horse</name>
    <dbReference type="NCBI Taxonomy" id="9796"/>
    <lineage>
        <taxon>Eukaryota</taxon>
        <taxon>Metazoa</taxon>
        <taxon>Chordata</taxon>
        <taxon>Craniata</taxon>
        <taxon>Vertebrata</taxon>
        <taxon>Euteleostomi</taxon>
        <taxon>Mammalia</taxon>
        <taxon>Eutheria</taxon>
        <taxon>Laurasiatheria</taxon>
        <taxon>Perissodactyla</taxon>
        <taxon>Equidae</taxon>
        <taxon>Equus</taxon>
    </lineage>
</organism>
<feature type="signal peptide" evidence="3">
    <location>
        <begin position="1"/>
        <end position="17"/>
    </location>
</feature>
<feature type="propeptide" id="PRO_0000028726" description="Activation peptide">
    <location>
        <begin position="18"/>
        <end position="99"/>
    </location>
</feature>
<feature type="chain" id="PRO_0000028727" description="Stromelysin-1">
    <location>
        <begin position="100"/>
        <end position="477"/>
    </location>
</feature>
<feature type="repeat" description="Hemopexin 1">
    <location>
        <begin position="287"/>
        <end position="336"/>
    </location>
</feature>
<feature type="repeat" description="Hemopexin 2">
    <location>
        <begin position="337"/>
        <end position="383"/>
    </location>
</feature>
<feature type="repeat" description="Hemopexin 3">
    <location>
        <begin position="385"/>
        <end position="433"/>
    </location>
</feature>
<feature type="repeat" description="Hemopexin 4">
    <location>
        <begin position="434"/>
        <end position="477"/>
    </location>
</feature>
<feature type="region of interest" description="Disordered" evidence="5">
    <location>
        <begin position="260"/>
        <end position="285"/>
    </location>
</feature>
<feature type="short sequence motif" description="Cysteine switch" evidence="1">
    <location>
        <begin position="90"/>
        <end position="97"/>
    </location>
</feature>
<feature type="active site" evidence="4">
    <location>
        <position position="219"/>
    </location>
</feature>
<feature type="binding site" description="in inhibited form" evidence="1">
    <location>
        <position position="92"/>
    </location>
    <ligand>
        <name>Zn(2+)</name>
        <dbReference type="ChEBI" id="CHEBI:29105"/>
        <label>2</label>
        <note>catalytic</note>
    </ligand>
</feature>
<feature type="binding site" evidence="1">
    <location>
        <position position="124"/>
    </location>
    <ligand>
        <name>Ca(2+)</name>
        <dbReference type="ChEBI" id="CHEBI:29108"/>
        <label>1</label>
    </ligand>
</feature>
<feature type="binding site" evidence="1">
    <location>
        <position position="158"/>
    </location>
    <ligand>
        <name>Ca(2+)</name>
        <dbReference type="ChEBI" id="CHEBI:29108"/>
        <label>2</label>
    </ligand>
</feature>
<feature type="binding site" evidence="1">
    <location>
        <position position="168"/>
    </location>
    <ligand>
        <name>Zn(2+)</name>
        <dbReference type="ChEBI" id="CHEBI:29105"/>
        <label>1</label>
    </ligand>
</feature>
<feature type="binding site" evidence="1">
    <location>
        <position position="170"/>
    </location>
    <ligand>
        <name>Zn(2+)</name>
        <dbReference type="ChEBI" id="CHEBI:29105"/>
        <label>1</label>
    </ligand>
</feature>
<feature type="binding site" evidence="1">
    <location>
        <position position="175"/>
    </location>
    <ligand>
        <name>Ca(2+)</name>
        <dbReference type="ChEBI" id="CHEBI:29108"/>
        <label>3</label>
    </ligand>
</feature>
<feature type="binding site" evidence="1">
    <location>
        <position position="176"/>
    </location>
    <ligand>
        <name>Ca(2+)</name>
        <dbReference type="ChEBI" id="CHEBI:29108"/>
        <label>3</label>
    </ligand>
</feature>
<feature type="binding site" evidence="1">
    <location>
        <position position="178"/>
    </location>
    <ligand>
        <name>Ca(2+)</name>
        <dbReference type="ChEBI" id="CHEBI:29108"/>
        <label>3</label>
    </ligand>
</feature>
<feature type="binding site" evidence="1">
    <location>
        <position position="180"/>
    </location>
    <ligand>
        <name>Ca(2+)</name>
        <dbReference type="ChEBI" id="CHEBI:29108"/>
        <label>3</label>
    </ligand>
</feature>
<feature type="binding site" evidence="1">
    <location>
        <position position="183"/>
    </location>
    <ligand>
        <name>Zn(2+)</name>
        <dbReference type="ChEBI" id="CHEBI:29105"/>
        <label>1</label>
    </ligand>
</feature>
<feature type="binding site" evidence="1">
    <location>
        <position position="190"/>
    </location>
    <ligand>
        <name>Ca(2+)</name>
        <dbReference type="ChEBI" id="CHEBI:29108"/>
        <label>2</label>
    </ligand>
</feature>
<feature type="binding site" evidence="1">
    <location>
        <position position="192"/>
    </location>
    <ligand>
        <name>Ca(2+)</name>
        <dbReference type="ChEBI" id="CHEBI:29108"/>
        <label>2</label>
    </ligand>
</feature>
<feature type="binding site" evidence="1">
    <location>
        <position position="194"/>
    </location>
    <ligand>
        <name>Ca(2+)</name>
        <dbReference type="ChEBI" id="CHEBI:29108"/>
        <label>2</label>
    </ligand>
</feature>
<feature type="binding site" evidence="1">
    <location>
        <position position="196"/>
    </location>
    <ligand>
        <name>Zn(2+)</name>
        <dbReference type="ChEBI" id="CHEBI:29105"/>
        <label>1</label>
    </ligand>
</feature>
<feature type="binding site" evidence="1">
    <location>
        <position position="198"/>
    </location>
    <ligand>
        <name>Ca(2+)</name>
        <dbReference type="ChEBI" id="CHEBI:29108"/>
        <label>3</label>
    </ligand>
</feature>
<feature type="binding site" evidence="1">
    <location>
        <position position="199"/>
    </location>
    <ligand>
        <name>Ca(2+)</name>
        <dbReference type="ChEBI" id="CHEBI:29108"/>
        <label>1</label>
    </ligand>
</feature>
<feature type="binding site" evidence="1">
    <location>
        <position position="201"/>
    </location>
    <ligand>
        <name>Ca(2+)</name>
        <dbReference type="ChEBI" id="CHEBI:29108"/>
        <label>1</label>
    </ligand>
</feature>
<feature type="binding site" evidence="1">
    <location>
        <position position="201"/>
    </location>
    <ligand>
        <name>Ca(2+)</name>
        <dbReference type="ChEBI" id="CHEBI:29108"/>
        <label>3</label>
    </ligand>
</feature>
<feature type="binding site" evidence="1">
    <location>
        <position position="218"/>
    </location>
    <ligand>
        <name>Zn(2+)</name>
        <dbReference type="ChEBI" id="CHEBI:29105"/>
        <label>2</label>
        <note>catalytic</note>
    </ligand>
</feature>
<feature type="binding site" evidence="1">
    <location>
        <position position="222"/>
    </location>
    <ligand>
        <name>Zn(2+)</name>
        <dbReference type="ChEBI" id="CHEBI:29105"/>
        <label>2</label>
        <note>catalytic</note>
    </ligand>
</feature>
<feature type="binding site" evidence="1">
    <location>
        <position position="228"/>
    </location>
    <ligand>
        <name>Zn(2+)</name>
        <dbReference type="ChEBI" id="CHEBI:29105"/>
        <label>2</label>
        <note>catalytic</note>
    </ligand>
</feature>
<feature type="binding site" evidence="1">
    <location>
        <position position="297"/>
    </location>
    <ligand>
        <name>Ca(2+)</name>
        <dbReference type="ChEBI" id="CHEBI:29108"/>
        <label>4</label>
    </ligand>
</feature>
<feature type="binding site" evidence="1">
    <location>
        <position position="389"/>
    </location>
    <ligand>
        <name>Ca(2+)</name>
        <dbReference type="ChEBI" id="CHEBI:29108"/>
        <label>4</label>
    </ligand>
</feature>
<feature type="binding site" evidence="1">
    <location>
        <position position="438"/>
    </location>
    <ligand>
        <name>Ca(2+)</name>
        <dbReference type="ChEBI" id="CHEBI:29108"/>
        <label>4</label>
    </ligand>
</feature>
<feature type="glycosylation site" description="N-linked (GlcNAc...) asparagine" evidence="3">
    <location>
        <position position="120"/>
    </location>
</feature>
<feature type="disulfide bond" evidence="1">
    <location>
        <begin position="290"/>
        <end position="477"/>
    </location>
</feature>
<feature type="sequence conflict" description="In Ref. 2." evidence="6" ref="2">
    <original>V</original>
    <variation>E</variation>
    <location>
        <position position="346"/>
    </location>
</feature>
<evidence type="ECO:0000250" key="1"/>
<evidence type="ECO:0000250" key="2">
    <source>
        <dbReference type="UniProtKB" id="P08254"/>
    </source>
</evidence>
<evidence type="ECO:0000255" key="3"/>
<evidence type="ECO:0000255" key="4">
    <source>
        <dbReference type="PROSITE-ProRule" id="PRU10095"/>
    </source>
</evidence>
<evidence type="ECO:0000256" key="5">
    <source>
        <dbReference type="SAM" id="MobiDB-lite"/>
    </source>
</evidence>
<evidence type="ECO:0000305" key="6"/>
<sequence>MKNLPILLLLCVAACSAYPLDRSARDEDSNMDLLQDYLEKYYDLGKEMRQYVRRKDSGPIVKKIQEMQKFLGLKVTGKLDSDTVEVMHKSRCGVPDVGHFTTFPGMPKWSKTHLTYRIVNYTQDLPRDAVDSDVEKALKIWEEVTPLTFSRIYEGEADIMITFAVREHGDFFPFDGPGKVLAHAYPPGPGMNGDAHFDDDEHWTKDASGINFLLVAAHELGHSLGLYHSTNTEALMYPLYNTLKGPARVRLSQDDVTGIQSLYGPPPASPDSPVEPSEPEPPAPGTLAMCDPALSFDAISTLRGEILFFKDRYFWRKTFRTLVPEFHPISSFWPSLPSGIDAAYEVTSRDSVFIFKGNKFWAIRGNEEQAGYPRGIHTLGFPPTVRKIDAAIFDKEKQKTYFFVEDKYWRFDEKRQSMEPGYPKQIAEDFPGIDSKLDAAFESFGFFYFFSGSSQFEFDPNAKKVTHVLKSNSWFNC</sequence>
<name>MMP3_HORSE</name>
<dbReference type="EC" id="3.4.24.17"/>
<dbReference type="EMBL" id="U62529">
    <property type="protein sequence ID" value="AAB05774.1"/>
    <property type="molecule type" value="mRNA"/>
</dbReference>
<dbReference type="RefSeq" id="NP_001075964.1">
    <property type="nucleotide sequence ID" value="NM_001082495.3"/>
</dbReference>
<dbReference type="SMR" id="Q28397"/>
<dbReference type="FunCoup" id="Q28397">
    <property type="interactions" value="5"/>
</dbReference>
<dbReference type="STRING" id="9796.ENSECAP00000001652"/>
<dbReference type="MEROPS" id="M10.005"/>
<dbReference type="GlyCosmos" id="Q28397">
    <property type="glycosylation" value="1 site, No reported glycans"/>
</dbReference>
<dbReference type="PaxDb" id="9796-ENSECAP00000001652"/>
<dbReference type="Ensembl" id="ENSECAT00000002326.3">
    <property type="protein sequence ID" value="ENSECAP00000001652.2"/>
    <property type="gene ID" value="ENSECAG00000019445.4"/>
</dbReference>
<dbReference type="GeneID" id="100034195"/>
<dbReference type="KEGG" id="ecb:100034195"/>
<dbReference type="CTD" id="4314"/>
<dbReference type="VGNC" id="VGNC:20223">
    <property type="gene designation" value="MMP12"/>
</dbReference>
<dbReference type="GeneTree" id="ENSGT00940000159759"/>
<dbReference type="HOGENOM" id="CLU_015489_6_0_1"/>
<dbReference type="InParanoid" id="Q28397"/>
<dbReference type="OMA" id="NFVQQYL"/>
<dbReference type="OrthoDB" id="406838at2759"/>
<dbReference type="Proteomes" id="UP000002281">
    <property type="component" value="Chromosome 7"/>
</dbReference>
<dbReference type="Bgee" id="ENSECAG00000019445">
    <property type="expression patterns" value="Expressed in synovial membrane of synovial joint and 12 other cell types or tissues"/>
</dbReference>
<dbReference type="GO" id="GO:0005829">
    <property type="term" value="C:cytosol"/>
    <property type="evidence" value="ECO:0007669"/>
    <property type="project" value="Ensembl"/>
</dbReference>
<dbReference type="GO" id="GO:0031012">
    <property type="term" value="C:extracellular matrix"/>
    <property type="evidence" value="ECO:0007669"/>
    <property type="project" value="InterPro"/>
</dbReference>
<dbReference type="GO" id="GO:0005576">
    <property type="term" value="C:extracellular region"/>
    <property type="evidence" value="ECO:0007669"/>
    <property type="project" value="UniProtKB-KW"/>
</dbReference>
<dbReference type="GO" id="GO:0005739">
    <property type="term" value="C:mitochondrion"/>
    <property type="evidence" value="ECO:0007669"/>
    <property type="project" value="Ensembl"/>
</dbReference>
<dbReference type="GO" id="GO:0004222">
    <property type="term" value="F:metalloendopeptidase activity"/>
    <property type="evidence" value="ECO:0000318"/>
    <property type="project" value="GO_Central"/>
</dbReference>
<dbReference type="GO" id="GO:0008233">
    <property type="term" value="F:peptidase activity"/>
    <property type="evidence" value="ECO:0000250"/>
    <property type="project" value="UniProtKB"/>
</dbReference>
<dbReference type="GO" id="GO:0008270">
    <property type="term" value="F:zinc ion binding"/>
    <property type="evidence" value="ECO:0007669"/>
    <property type="project" value="InterPro"/>
</dbReference>
<dbReference type="GO" id="GO:0071230">
    <property type="term" value="P:cellular response to amino acid stimulus"/>
    <property type="evidence" value="ECO:0007669"/>
    <property type="project" value="Ensembl"/>
</dbReference>
<dbReference type="GO" id="GO:0034614">
    <property type="term" value="P:cellular response to reactive oxygen species"/>
    <property type="evidence" value="ECO:0007669"/>
    <property type="project" value="Ensembl"/>
</dbReference>
<dbReference type="GO" id="GO:0071492">
    <property type="term" value="P:cellular response to UV-A"/>
    <property type="evidence" value="ECO:0000250"/>
    <property type="project" value="UniProtKB"/>
</dbReference>
<dbReference type="GO" id="GO:0030574">
    <property type="term" value="P:collagen catabolic process"/>
    <property type="evidence" value="ECO:0000318"/>
    <property type="project" value="GO_Central"/>
</dbReference>
<dbReference type="GO" id="GO:0030198">
    <property type="term" value="P:extracellular matrix organization"/>
    <property type="evidence" value="ECO:0000318"/>
    <property type="project" value="GO_Central"/>
</dbReference>
<dbReference type="GO" id="GO:0045087">
    <property type="term" value="P:innate immune response"/>
    <property type="evidence" value="ECO:0007669"/>
    <property type="project" value="UniProtKB-KW"/>
</dbReference>
<dbReference type="GO" id="GO:0051898">
    <property type="term" value="P:negative regulation of phosphatidylinositol 3-kinase/protein kinase B signal transduction"/>
    <property type="evidence" value="ECO:0007669"/>
    <property type="project" value="Ensembl"/>
</dbReference>
<dbReference type="GO" id="GO:2000378">
    <property type="term" value="P:negative regulation of reactive oxygen species metabolic process"/>
    <property type="evidence" value="ECO:0007669"/>
    <property type="project" value="Ensembl"/>
</dbReference>
<dbReference type="GO" id="GO:0031334">
    <property type="term" value="P:positive regulation of protein-containing complex assembly"/>
    <property type="evidence" value="ECO:0007669"/>
    <property type="project" value="Ensembl"/>
</dbReference>
<dbReference type="GO" id="GO:0030163">
    <property type="term" value="P:protein catabolic process"/>
    <property type="evidence" value="ECO:0007669"/>
    <property type="project" value="Ensembl"/>
</dbReference>
<dbReference type="GO" id="GO:0006508">
    <property type="term" value="P:proteolysis"/>
    <property type="evidence" value="ECO:0007669"/>
    <property type="project" value="UniProtKB-KW"/>
</dbReference>
<dbReference type="GO" id="GO:0030334">
    <property type="term" value="P:regulation of cell migration"/>
    <property type="evidence" value="ECO:0007669"/>
    <property type="project" value="Ensembl"/>
</dbReference>
<dbReference type="CDD" id="cd00094">
    <property type="entry name" value="HX"/>
    <property type="match status" value="1"/>
</dbReference>
<dbReference type="CDD" id="cd04278">
    <property type="entry name" value="ZnMc_MMP"/>
    <property type="match status" value="1"/>
</dbReference>
<dbReference type="FunFam" id="3.40.390.10:FF:000007">
    <property type="entry name" value="Collagenase 3"/>
    <property type="match status" value="1"/>
</dbReference>
<dbReference type="FunFam" id="2.110.10.10:FF:000002">
    <property type="entry name" value="Matrix metallopeptidase 3"/>
    <property type="match status" value="1"/>
</dbReference>
<dbReference type="Gene3D" id="3.40.390.10">
    <property type="entry name" value="Collagenase (Catalytic Domain)"/>
    <property type="match status" value="1"/>
</dbReference>
<dbReference type="Gene3D" id="2.110.10.10">
    <property type="entry name" value="Hemopexin-like domain"/>
    <property type="match status" value="1"/>
</dbReference>
<dbReference type="InterPro" id="IPR000585">
    <property type="entry name" value="Hemopexin-like_dom"/>
</dbReference>
<dbReference type="InterPro" id="IPR036375">
    <property type="entry name" value="Hemopexin-like_dom_sf"/>
</dbReference>
<dbReference type="InterPro" id="IPR018487">
    <property type="entry name" value="Hemopexin-like_repeat"/>
</dbReference>
<dbReference type="InterPro" id="IPR018486">
    <property type="entry name" value="Hemopexin_CS"/>
</dbReference>
<dbReference type="InterPro" id="IPR033739">
    <property type="entry name" value="M10A_MMP"/>
</dbReference>
<dbReference type="InterPro" id="IPR024079">
    <property type="entry name" value="MetalloPept_cat_dom_sf"/>
</dbReference>
<dbReference type="InterPro" id="IPR001818">
    <property type="entry name" value="Pept_M10_metallopeptidase"/>
</dbReference>
<dbReference type="InterPro" id="IPR021190">
    <property type="entry name" value="Pept_M10A"/>
</dbReference>
<dbReference type="InterPro" id="IPR006026">
    <property type="entry name" value="Peptidase_Metallo"/>
</dbReference>
<dbReference type="InterPro" id="IPR002477">
    <property type="entry name" value="Peptidoglycan-bd-like"/>
</dbReference>
<dbReference type="InterPro" id="IPR036365">
    <property type="entry name" value="PGBD-like_sf"/>
</dbReference>
<dbReference type="PANTHER" id="PTHR10201">
    <property type="entry name" value="MATRIX METALLOPROTEINASE"/>
    <property type="match status" value="1"/>
</dbReference>
<dbReference type="PANTHER" id="PTHR10201:SF215">
    <property type="entry name" value="STROMELYSIN-1"/>
    <property type="match status" value="1"/>
</dbReference>
<dbReference type="Pfam" id="PF00045">
    <property type="entry name" value="Hemopexin"/>
    <property type="match status" value="4"/>
</dbReference>
<dbReference type="Pfam" id="PF00413">
    <property type="entry name" value="Peptidase_M10"/>
    <property type="match status" value="1"/>
</dbReference>
<dbReference type="Pfam" id="PF01471">
    <property type="entry name" value="PG_binding_1"/>
    <property type="match status" value="1"/>
</dbReference>
<dbReference type="PIRSF" id="PIRSF001191">
    <property type="entry name" value="Peptidase_M10A_matrix"/>
    <property type="match status" value="1"/>
</dbReference>
<dbReference type="PRINTS" id="PR00138">
    <property type="entry name" value="MATRIXIN"/>
</dbReference>
<dbReference type="SMART" id="SM00120">
    <property type="entry name" value="HX"/>
    <property type="match status" value="4"/>
</dbReference>
<dbReference type="SMART" id="SM00235">
    <property type="entry name" value="ZnMc"/>
    <property type="match status" value="1"/>
</dbReference>
<dbReference type="SUPFAM" id="SSF50923">
    <property type="entry name" value="Hemopexin-like domain"/>
    <property type="match status" value="1"/>
</dbReference>
<dbReference type="SUPFAM" id="SSF55486">
    <property type="entry name" value="Metalloproteases ('zincins'), catalytic domain"/>
    <property type="match status" value="1"/>
</dbReference>
<dbReference type="SUPFAM" id="SSF47090">
    <property type="entry name" value="PGBD-like"/>
    <property type="match status" value="1"/>
</dbReference>
<dbReference type="PROSITE" id="PS00024">
    <property type="entry name" value="HEMOPEXIN"/>
    <property type="match status" value="1"/>
</dbReference>
<dbReference type="PROSITE" id="PS51642">
    <property type="entry name" value="HEMOPEXIN_2"/>
    <property type="match status" value="4"/>
</dbReference>
<dbReference type="PROSITE" id="PS00142">
    <property type="entry name" value="ZINC_PROTEASE"/>
    <property type="match status" value="1"/>
</dbReference>
<gene>
    <name type="primary">MMP3</name>
</gene>
<reference key="1">
    <citation type="journal article" date="1998" name="Am. J. Vet. Res.">
        <title>Molecular characteristics of equine stromelysin and the tissue inhibitor of metalloproteinase 1.</title>
        <authorList>
            <person name="Richardson D.W."/>
            <person name="Dodge G.R."/>
        </authorList>
    </citation>
    <scope>NUCLEOTIDE SEQUENCE [MRNA]</scope>
    <source>
        <tissue>Cartilage</tissue>
    </source>
</reference>
<reference key="2">
    <citation type="journal article" date="1998" name="Am. J. Vet. Res.">
        <title>Molecular cloning and cartilage gene expression of equine stromelysin 1 (matrix metalloproteinase 3).</title>
        <authorList>
            <person name="Balkman C.E."/>
            <person name="Nixon A.J."/>
        </authorList>
    </citation>
    <scope>NUCLEOTIDE SEQUENCE [MRNA]</scope>
    <source>
        <tissue>Cartilage</tissue>
    </source>
</reference>
<comment type="function">
    <text evidence="2">Metalloproteinase with a rather broad substrate specificity that can degrade fibronectin, laminin, gelatins of type I, III, IV, and V; collagens III, IV, X, and IX, and cartilage proteoglycans. Activates different molecules including growth factors, plasminogen or other matrix metalloproteinases such as MMP9. Once released into the extracellular matrix (ECM), the inactive pro-enzyme is activated by the plasmin cascade signaling pathway. Also acts intracellularly. For example, in dopaminergic neurons, gets activated by the serine protease HTRA2 upon stress and plays a pivotal role in DA neuronal degeneration by mediating microglial activation and alpha-synuclein/SNCA cleavage. In addition, plays a role in immune response and possesses antiviral activity against various viruses. Mechanistically, translocates from the cytoplasm into the cell nucleus upon virus infection to influence NF-kappa-B activities.</text>
</comment>
<comment type="catalytic activity">
    <reaction evidence="2">
        <text>Preferential cleavage where P1', P2' and P3' are hydrophobic residues.</text>
        <dbReference type="EC" id="3.4.24.17"/>
    </reaction>
</comment>
<comment type="cofactor">
    <cofactor evidence="1">
        <name>Ca(2+)</name>
        <dbReference type="ChEBI" id="CHEBI:29108"/>
    </cofactor>
    <text evidence="1">Binds 4 Ca(2+) ions per subunit.</text>
</comment>
<comment type="cofactor">
    <cofactor evidence="1">
        <name>Zn(2+)</name>
        <dbReference type="ChEBI" id="CHEBI:29105"/>
    </cofactor>
    <text evidence="1">Binds 2 Zn(2+) ions per subunit.</text>
</comment>
<comment type="subcellular location">
    <subcellularLocation>
        <location evidence="6">Secreted</location>
        <location evidence="6">Extracellular space</location>
        <location evidence="6">Extracellular matrix</location>
    </subcellularLocation>
</comment>
<comment type="domain">
    <text>The conserved cysteine present in the cysteine-switch motif binds the catalytic zinc ion, thus inhibiting the enzyme. The dissociation of the cysteine from the zinc ion upon the activation-peptide release activates the enzyme.</text>
</comment>
<comment type="similarity">
    <text evidence="6">Belongs to the peptidase M10A family.</text>
</comment>
<proteinExistence type="evidence at transcript level"/>
<keyword id="KW-0106">Calcium</keyword>
<keyword id="KW-0177">Collagen degradation</keyword>
<keyword id="KW-1015">Disulfide bond</keyword>
<keyword id="KW-0272">Extracellular matrix</keyword>
<keyword id="KW-0325">Glycoprotein</keyword>
<keyword id="KW-0378">Hydrolase</keyword>
<keyword id="KW-0391">Immunity</keyword>
<keyword id="KW-0399">Innate immunity</keyword>
<keyword id="KW-0479">Metal-binding</keyword>
<keyword id="KW-0482">Metalloprotease</keyword>
<keyword id="KW-0645">Protease</keyword>
<keyword id="KW-1185">Reference proteome</keyword>
<keyword id="KW-0677">Repeat</keyword>
<keyword id="KW-0964">Secreted</keyword>
<keyword id="KW-0732">Signal</keyword>
<keyword id="KW-0862">Zinc</keyword>
<keyword id="KW-0865">Zymogen</keyword>